<evidence type="ECO:0000255" key="1">
    <source>
        <dbReference type="HAMAP-Rule" id="MF_01810"/>
    </source>
</evidence>
<evidence type="ECO:0000256" key="2">
    <source>
        <dbReference type="SAM" id="MobiDB-lite"/>
    </source>
</evidence>
<keyword id="KW-0997">Cell inner membrane</keyword>
<keyword id="KW-1003">Cell membrane</keyword>
<keyword id="KW-0143">Chaperone</keyword>
<keyword id="KW-0472">Membrane</keyword>
<keyword id="KW-0653">Protein transport</keyword>
<keyword id="KW-1185">Reference proteome</keyword>
<keyword id="KW-0812">Transmembrane</keyword>
<keyword id="KW-1133">Transmembrane helix</keyword>
<keyword id="KW-0813">Transport</keyword>
<reference key="1">
    <citation type="submission" date="2007-05" db="EMBL/GenBank/DDBJ databases">
        <title>Complete sequence of chromosome of Acidiphilium cryptum JF-5.</title>
        <authorList>
            <consortium name="US DOE Joint Genome Institute"/>
            <person name="Copeland A."/>
            <person name="Lucas S."/>
            <person name="Lapidus A."/>
            <person name="Barry K."/>
            <person name="Detter J.C."/>
            <person name="Glavina del Rio T."/>
            <person name="Hammon N."/>
            <person name="Israni S."/>
            <person name="Dalin E."/>
            <person name="Tice H."/>
            <person name="Pitluck S."/>
            <person name="Sims D."/>
            <person name="Brettin T."/>
            <person name="Bruce D."/>
            <person name="Han C."/>
            <person name="Schmutz J."/>
            <person name="Larimer F."/>
            <person name="Land M."/>
            <person name="Hauser L."/>
            <person name="Kyrpides N."/>
            <person name="Kim E."/>
            <person name="Magnuson T."/>
            <person name="Richardson P."/>
        </authorList>
    </citation>
    <scope>NUCLEOTIDE SEQUENCE [LARGE SCALE GENOMIC DNA]</scope>
    <source>
        <strain>JF-5</strain>
    </source>
</reference>
<feature type="chain" id="PRO_1000070050" description="Membrane protein insertase YidC">
    <location>
        <begin position="1"/>
        <end position="601"/>
    </location>
</feature>
<feature type="transmembrane region" description="Helical" evidence="1">
    <location>
        <begin position="10"/>
        <end position="30"/>
    </location>
</feature>
<feature type="transmembrane region" description="Helical" evidence="1">
    <location>
        <begin position="382"/>
        <end position="404"/>
    </location>
</feature>
<feature type="transmembrane region" description="Helical" evidence="1">
    <location>
        <begin position="455"/>
        <end position="475"/>
    </location>
</feature>
<feature type="transmembrane region" description="Helical" evidence="1">
    <location>
        <begin position="510"/>
        <end position="530"/>
    </location>
</feature>
<feature type="transmembrane region" description="Helical" evidence="1">
    <location>
        <begin position="549"/>
        <end position="569"/>
    </location>
</feature>
<feature type="region of interest" description="Disordered" evidence="2">
    <location>
        <begin position="34"/>
        <end position="63"/>
    </location>
</feature>
<feature type="compositionally biased region" description="Low complexity" evidence="2">
    <location>
        <begin position="39"/>
        <end position="53"/>
    </location>
</feature>
<feature type="compositionally biased region" description="Pro residues" evidence="2">
    <location>
        <begin position="54"/>
        <end position="63"/>
    </location>
</feature>
<organism>
    <name type="scientific">Acidiphilium cryptum (strain JF-5)</name>
    <dbReference type="NCBI Taxonomy" id="349163"/>
    <lineage>
        <taxon>Bacteria</taxon>
        <taxon>Pseudomonadati</taxon>
        <taxon>Pseudomonadota</taxon>
        <taxon>Alphaproteobacteria</taxon>
        <taxon>Acetobacterales</taxon>
        <taxon>Acidocellaceae</taxon>
        <taxon>Acidiphilium</taxon>
    </lineage>
</organism>
<proteinExistence type="inferred from homology"/>
<gene>
    <name evidence="1" type="primary">yidC</name>
    <name type="ordered locus">Acry_2141</name>
</gene>
<comment type="function">
    <text evidence="1">Required for the insertion and/or proper folding and/or complex formation of integral membrane proteins into the membrane. Involved in integration of membrane proteins that insert both dependently and independently of the Sec translocase complex, as well as at least some lipoproteins. Aids folding of multispanning membrane proteins.</text>
</comment>
<comment type="subunit">
    <text evidence="1">Interacts with the Sec translocase complex via SecD. Specifically interacts with transmembrane segments of nascent integral membrane proteins during membrane integration.</text>
</comment>
<comment type="subcellular location">
    <subcellularLocation>
        <location evidence="1">Cell inner membrane</location>
        <topology evidence="1">Multi-pass membrane protein</topology>
    </subcellularLocation>
</comment>
<comment type="similarity">
    <text evidence="1">Belongs to the OXA1/ALB3/YidC family. Type 1 subfamily.</text>
</comment>
<protein>
    <recommendedName>
        <fullName evidence="1">Membrane protein insertase YidC</fullName>
    </recommendedName>
    <alternativeName>
        <fullName evidence="1">Foldase YidC</fullName>
    </alternativeName>
    <alternativeName>
        <fullName evidence="1">Membrane integrase YidC</fullName>
    </alternativeName>
    <alternativeName>
        <fullName evidence="1">Membrane protein YidC</fullName>
    </alternativeName>
</protein>
<sequence length="601" mass="65356">MDNRRLLYSISISLVILVLFQVIASYVLPPPKKAPPHPATQTAQTQPVSGQPAPGVPAPSAVPPAAAPGGVAAKIPAGPRLAISTPLLRGSMSLVGARLDDLVLTRYHQTVKKTSPLVQLLSQAGTAKSYYVQFGWDAAPGSSLKVPGPDTVWTSSGGDLSPAHPVTLSWNNGAGVTFELKLAVDRQYLFTVQQRVINHGAAAVEVYPWSRIRRDFLPEEPGSFTLHKGPIGVFHGTLHEMGYEGVKSGGKHPAAGDAPGTAYQTTNLGGWAGITGKYWLTALIPSQGREVIGAYRYLADPGQPEHGGYQVDYMTAKPVDAAPGATASTTTHVFAGAKVLSILSHYETQYRIPLFERAIDFGWFFFLTKPIFIALDYLAGVFGNMGVAIIVFTIGLKLVLFPLVRTSYRSMARMRAITPKVQALRERYKDDQMQQQKEIMALYKAEGVNPAAGCLPMLPQIPIFFSLYKVIFISIGMRHAPFVLWIHDLSAEDPTNIFNLFGLLPFHPSALSPFLHLGILPIIMGITMWGQQRLNPPPPDPTQAKMMQFMPVIFTFMLGRFAAGLVLYYCVNNTLTILQQWTIMRGTNAAPRAAANLNAKG</sequence>
<dbReference type="EMBL" id="CP000697">
    <property type="protein sequence ID" value="ABQ31340.1"/>
    <property type="molecule type" value="Genomic_DNA"/>
</dbReference>
<dbReference type="RefSeq" id="WP_012039836.1">
    <property type="nucleotide sequence ID" value="NC_009484.1"/>
</dbReference>
<dbReference type="SMR" id="A5G0F8"/>
<dbReference type="STRING" id="349163.Acry_2141"/>
<dbReference type="KEGG" id="acr:Acry_2141"/>
<dbReference type="eggNOG" id="COG0706">
    <property type="taxonomic scope" value="Bacteria"/>
</dbReference>
<dbReference type="HOGENOM" id="CLU_016535_1_0_5"/>
<dbReference type="Proteomes" id="UP000000245">
    <property type="component" value="Chromosome"/>
</dbReference>
<dbReference type="GO" id="GO:0005886">
    <property type="term" value="C:plasma membrane"/>
    <property type="evidence" value="ECO:0007669"/>
    <property type="project" value="UniProtKB-SubCell"/>
</dbReference>
<dbReference type="GO" id="GO:0032977">
    <property type="term" value="F:membrane insertase activity"/>
    <property type="evidence" value="ECO:0007669"/>
    <property type="project" value="InterPro"/>
</dbReference>
<dbReference type="GO" id="GO:0051205">
    <property type="term" value="P:protein insertion into membrane"/>
    <property type="evidence" value="ECO:0007669"/>
    <property type="project" value="TreeGrafter"/>
</dbReference>
<dbReference type="GO" id="GO:0015031">
    <property type="term" value="P:protein transport"/>
    <property type="evidence" value="ECO:0007669"/>
    <property type="project" value="UniProtKB-KW"/>
</dbReference>
<dbReference type="CDD" id="cd20070">
    <property type="entry name" value="5TM_YidC_Alb3"/>
    <property type="match status" value="1"/>
</dbReference>
<dbReference type="CDD" id="cd19961">
    <property type="entry name" value="EcYidC-like_peri"/>
    <property type="match status" value="1"/>
</dbReference>
<dbReference type="Gene3D" id="2.70.98.90">
    <property type="match status" value="1"/>
</dbReference>
<dbReference type="HAMAP" id="MF_01810">
    <property type="entry name" value="YidC_type1"/>
    <property type="match status" value="1"/>
</dbReference>
<dbReference type="InterPro" id="IPR019998">
    <property type="entry name" value="Membr_insert_YidC"/>
</dbReference>
<dbReference type="InterPro" id="IPR028053">
    <property type="entry name" value="Membr_insert_YidC_N"/>
</dbReference>
<dbReference type="InterPro" id="IPR001708">
    <property type="entry name" value="YidC/ALB3/OXA1/COX18"/>
</dbReference>
<dbReference type="InterPro" id="IPR028055">
    <property type="entry name" value="YidC/Oxa/ALB_C"/>
</dbReference>
<dbReference type="InterPro" id="IPR047196">
    <property type="entry name" value="YidC_ALB_C"/>
</dbReference>
<dbReference type="InterPro" id="IPR038221">
    <property type="entry name" value="YidC_periplasmic_sf"/>
</dbReference>
<dbReference type="NCBIfam" id="NF002353">
    <property type="entry name" value="PRK01318.1-4"/>
    <property type="match status" value="1"/>
</dbReference>
<dbReference type="NCBIfam" id="TIGR03593">
    <property type="entry name" value="yidC_nterm"/>
    <property type="match status" value="1"/>
</dbReference>
<dbReference type="NCBIfam" id="TIGR03592">
    <property type="entry name" value="yidC_oxa1_cterm"/>
    <property type="match status" value="1"/>
</dbReference>
<dbReference type="PANTHER" id="PTHR12428:SF65">
    <property type="entry name" value="CYTOCHROME C OXIDASE ASSEMBLY PROTEIN COX18, MITOCHONDRIAL"/>
    <property type="match status" value="1"/>
</dbReference>
<dbReference type="PANTHER" id="PTHR12428">
    <property type="entry name" value="OXA1"/>
    <property type="match status" value="1"/>
</dbReference>
<dbReference type="Pfam" id="PF02096">
    <property type="entry name" value="60KD_IMP"/>
    <property type="match status" value="1"/>
</dbReference>
<dbReference type="Pfam" id="PF14849">
    <property type="entry name" value="YidC_periplas"/>
    <property type="match status" value="1"/>
</dbReference>
<dbReference type="PRINTS" id="PR00701">
    <property type="entry name" value="60KDINNERMP"/>
</dbReference>
<dbReference type="PRINTS" id="PR01900">
    <property type="entry name" value="YIDCPROTEIN"/>
</dbReference>
<name>YIDC_ACICJ</name>
<accession>A5G0F8</accession>